<proteinExistence type="evidence at transcript level"/>
<reference key="1">
    <citation type="journal article" date="2011" name="PLoS Genet.">
        <title>Genomic analysis of the necrotrophic fungal pathogens Sclerotinia sclerotiorum and Botrytis cinerea.</title>
        <authorList>
            <person name="Amselem J."/>
            <person name="Cuomo C.A."/>
            <person name="van Kan J.A.L."/>
            <person name="Viaud M."/>
            <person name="Benito E.P."/>
            <person name="Couloux A."/>
            <person name="Coutinho P.M."/>
            <person name="de Vries R.P."/>
            <person name="Dyer P.S."/>
            <person name="Fillinger S."/>
            <person name="Fournier E."/>
            <person name="Gout L."/>
            <person name="Hahn M."/>
            <person name="Kohn L."/>
            <person name="Lapalu N."/>
            <person name="Plummer K.M."/>
            <person name="Pradier J.-M."/>
            <person name="Quevillon E."/>
            <person name="Sharon A."/>
            <person name="Simon A."/>
            <person name="ten Have A."/>
            <person name="Tudzynski B."/>
            <person name="Tudzynski P."/>
            <person name="Wincker P."/>
            <person name="Andrew M."/>
            <person name="Anthouard V."/>
            <person name="Beever R.E."/>
            <person name="Beffa R."/>
            <person name="Benoit I."/>
            <person name="Bouzid O."/>
            <person name="Brault B."/>
            <person name="Chen Z."/>
            <person name="Choquer M."/>
            <person name="Collemare J."/>
            <person name="Cotton P."/>
            <person name="Danchin E.G."/>
            <person name="Da Silva C."/>
            <person name="Gautier A."/>
            <person name="Giraud C."/>
            <person name="Giraud T."/>
            <person name="Gonzalez C."/>
            <person name="Grossetete S."/>
            <person name="Gueldener U."/>
            <person name="Henrissat B."/>
            <person name="Howlett B.J."/>
            <person name="Kodira C."/>
            <person name="Kretschmer M."/>
            <person name="Lappartient A."/>
            <person name="Leroch M."/>
            <person name="Levis C."/>
            <person name="Mauceli E."/>
            <person name="Neuveglise C."/>
            <person name="Oeser B."/>
            <person name="Pearson M."/>
            <person name="Poulain J."/>
            <person name="Poussereau N."/>
            <person name="Quesneville H."/>
            <person name="Rascle C."/>
            <person name="Schumacher J."/>
            <person name="Segurens B."/>
            <person name="Sexton A."/>
            <person name="Silva E."/>
            <person name="Sirven C."/>
            <person name="Soanes D.M."/>
            <person name="Talbot N.J."/>
            <person name="Templeton M."/>
            <person name="Yandava C."/>
            <person name="Yarden O."/>
            <person name="Zeng Q."/>
            <person name="Rollins J.A."/>
            <person name="Lebrun M.-H."/>
            <person name="Dickman M."/>
        </authorList>
    </citation>
    <scope>NUCLEOTIDE SEQUENCE [LARGE SCALE GENOMIC DNA]</scope>
    <source>
        <strain>B05.10</strain>
    </source>
</reference>
<reference key="2">
    <citation type="journal article" date="2012" name="Eukaryot. Cell">
        <title>Genome update of Botrytis cinerea strains B05.10 and T4.</title>
        <authorList>
            <person name="Staats M."/>
            <person name="van Kan J.A.L."/>
        </authorList>
    </citation>
    <scope>NUCLEOTIDE SEQUENCE [LARGE SCALE GENOMIC DNA]</scope>
    <source>
        <strain>B05.10</strain>
    </source>
</reference>
<reference key="3">
    <citation type="journal article" date="2017" name="Mol. Plant Pathol.">
        <title>A gapless genome sequence of the fungus Botrytis cinerea.</title>
        <authorList>
            <person name="van Kan J.A.L."/>
            <person name="Stassen J.H.M."/>
            <person name="Mosbach A."/>
            <person name="van der Lee T.A.J."/>
            <person name="Faino L."/>
            <person name="Farmer A.D."/>
            <person name="Papasotiriou D.G."/>
            <person name="Zhou S."/>
            <person name="Seidl M.F."/>
            <person name="Cottam E."/>
            <person name="Edel D."/>
            <person name="Hahn M."/>
            <person name="Schwartz D.C."/>
            <person name="Dietrich R.A."/>
            <person name="Widdison S."/>
            <person name="Scalliet G."/>
        </authorList>
    </citation>
    <scope>NUCLEOTIDE SEQUENCE [LARGE SCALE GENOMIC DNA]</scope>
    <source>
        <strain>B05.10</strain>
    </source>
</reference>
<reference key="4">
    <citation type="journal article" date="2004" name="Appl. Environ. Microbiol.">
        <title>The P450 monooxygenase BcABA1 is essential for abscisic acid biosynthesis in Botrytis cinerea.</title>
        <authorList>
            <person name="Siewers V."/>
            <person name="Smedsgaard J."/>
            <person name="Tudzynski P."/>
        </authorList>
    </citation>
    <scope>FUNCTION</scope>
</reference>
<reference key="5">
    <citation type="journal article" date="2006" name="Appl. Environ. Microbiol.">
        <title>Identification of an abscisic acid gene cluster in the grey mold Botrytis cinerea.</title>
        <authorList>
            <person name="Siewers V."/>
            <person name="Kokkelink L."/>
            <person name="Smedsgaard J."/>
            <person name="Tudzynski P."/>
        </authorList>
    </citation>
    <scope>INDUCTION</scope>
    <scope>FUNCTION</scope>
    <scope>DISRUPTION PHENOTYPE</scope>
    <scope>PATHWAY</scope>
</reference>
<reference key="6">
    <citation type="journal article" date="2018" name="J. Am. Chem. Soc.">
        <title>Unveiling biosynthesis of the phytohormone abscisic acid in fungi: unprecedented mechanism of core scaffold formation catalyzed by an unusual sesquiterpene synthase.</title>
        <authorList>
            <person name="Takino J."/>
            <person name="Kozaki T."/>
            <person name="Sato Y."/>
            <person name="Liu C."/>
            <person name="Ozaki T."/>
            <person name="Minami A."/>
            <person name="Oikawa H."/>
        </authorList>
    </citation>
    <scope>FUNCTION</scope>
</reference>
<dbReference type="EC" id="1.-.-.-" evidence="9"/>
<dbReference type="EMBL" id="CP009812">
    <property type="protein sequence ID" value="ATZ52741.1"/>
    <property type="molecule type" value="Genomic_DNA"/>
</dbReference>
<dbReference type="SMR" id="A0A384JQH2"/>
<dbReference type="GlyCosmos" id="A0A384JQH2">
    <property type="glycosylation" value="4 sites, No reported glycans"/>
</dbReference>
<dbReference type="EnsemblFungi" id="Bcin08g03840.1">
    <property type="protein sequence ID" value="Bcin08p03840.1"/>
    <property type="gene ID" value="Bcin08g03840"/>
</dbReference>
<dbReference type="VEuPathDB" id="FungiDB:Bcin08g03840"/>
<dbReference type="OrthoDB" id="1470350at2759"/>
<dbReference type="Proteomes" id="UP000001798">
    <property type="component" value="Chromosome bcin08"/>
</dbReference>
<dbReference type="GO" id="GO:0016020">
    <property type="term" value="C:membrane"/>
    <property type="evidence" value="ECO:0007669"/>
    <property type="project" value="UniProtKB-SubCell"/>
</dbReference>
<dbReference type="GO" id="GO:0020037">
    <property type="term" value="F:heme binding"/>
    <property type="evidence" value="ECO:0007669"/>
    <property type="project" value="InterPro"/>
</dbReference>
<dbReference type="GO" id="GO:0005506">
    <property type="term" value="F:iron ion binding"/>
    <property type="evidence" value="ECO:0007669"/>
    <property type="project" value="InterPro"/>
</dbReference>
<dbReference type="GO" id="GO:0004497">
    <property type="term" value="F:monooxygenase activity"/>
    <property type="evidence" value="ECO:0007669"/>
    <property type="project" value="UniProtKB-KW"/>
</dbReference>
<dbReference type="GO" id="GO:0016705">
    <property type="term" value="F:oxidoreductase activity, acting on paired donors, with incorporation or reduction of molecular oxygen"/>
    <property type="evidence" value="ECO:0007669"/>
    <property type="project" value="InterPro"/>
</dbReference>
<dbReference type="GO" id="GO:0009688">
    <property type="term" value="P:abscisic acid biosynthetic process"/>
    <property type="evidence" value="ECO:0000315"/>
    <property type="project" value="GO_Central"/>
</dbReference>
<dbReference type="CDD" id="cd11058">
    <property type="entry name" value="CYP60B-like"/>
    <property type="match status" value="1"/>
</dbReference>
<dbReference type="Gene3D" id="1.10.630.10">
    <property type="entry name" value="Cytochrome P450"/>
    <property type="match status" value="1"/>
</dbReference>
<dbReference type="InterPro" id="IPR001128">
    <property type="entry name" value="Cyt_P450"/>
</dbReference>
<dbReference type="InterPro" id="IPR017972">
    <property type="entry name" value="Cyt_P450_CS"/>
</dbReference>
<dbReference type="InterPro" id="IPR002401">
    <property type="entry name" value="Cyt_P450_E_grp-I"/>
</dbReference>
<dbReference type="InterPro" id="IPR036396">
    <property type="entry name" value="Cyt_P450_sf"/>
</dbReference>
<dbReference type="InterPro" id="IPR050121">
    <property type="entry name" value="Cytochrome_P450_monoxygenase"/>
</dbReference>
<dbReference type="PANTHER" id="PTHR24305">
    <property type="entry name" value="CYTOCHROME P450"/>
    <property type="match status" value="1"/>
</dbReference>
<dbReference type="PANTHER" id="PTHR24305:SF210">
    <property type="entry name" value="CYTOCHROME P450 MONOOXYGENASE ASQL-RELATED"/>
    <property type="match status" value="1"/>
</dbReference>
<dbReference type="Pfam" id="PF00067">
    <property type="entry name" value="p450"/>
    <property type="match status" value="1"/>
</dbReference>
<dbReference type="PRINTS" id="PR00463">
    <property type="entry name" value="EP450I"/>
</dbReference>
<dbReference type="PRINTS" id="PR00385">
    <property type="entry name" value="P450"/>
</dbReference>
<dbReference type="SUPFAM" id="SSF48264">
    <property type="entry name" value="Cytochrome P450"/>
    <property type="match status" value="1"/>
</dbReference>
<dbReference type="PROSITE" id="PS00086">
    <property type="entry name" value="CYTOCHROME_P450"/>
    <property type="match status" value="1"/>
</dbReference>
<feature type="chain" id="PRO_0000448416" description="Cytochrome P450 monooxygenase aba2">
    <location>
        <begin position="1"/>
        <end position="527"/>
    </location>
</feature>
<feature type="transmembrane region" description="Helical" evidence="2">
    <location>
        <begin position="26"/>
        <end position="46"/>
    </location>
</feature>
<feature type="binding site" description="axial binding residue" evidence="1">
    <location>
        <position position="460"/>
    </location>
    <ligand>
        <name>heme</name>
        <dbReference type="ChEBI" id="CHEBI:30413"/>
    </ligand>
    <ligandPart>
        <name>Fe</name>
        <dbReference type="ChEBI" id="CHEBI:18248"/>
    </ligandPart>
</feature>
<feature type="glycosylation site" description="N-linked (GlcNAc...) asparagine" evidence="3">
    <location>
        <position position="189"/>
    </location>
</feature>
<feature type="glycosylation site" description="N-linked (GlcNAc...) asparagine" evidence="3">
    <location>
        <position position="420"/>
    </location>
</feature>
<feature type="glycosylation site" description="N-linked (GlcNAc...) asparagine" evidence="3">
    <location>
        <position position="448"/>
    </location>
</feature>
<feature type="glycosylation site" description="N-linked (GlcNAc...) asparagine" evidence="3">
    <location>
        <position position="464"/>
    </location>
</feature>
<gene>
    <name type="primary">aba2</name>
    <name type="ORF">BCIN_08g03840</name>
</gene>
<comment type="function">
    <text evidence="4 5 6 9">Cytochrome P450 monooxygenase; part of the gene cluster that mediates the biosynthesis of abscisic acid (ABA), a phytohormone that acts antagonistically toward salicylic acid (SA), jasmonic acid (JA) and ethylene (ETH) signaling, to impede plant defense responses (PubMed:15240257, PubMed:16820452). The first step of the pathway catalyzes the reaction from farnesyl diphosphate to alpha-ionylideneethane performed by the alpha-ionylideneethane synthase aba3 via a three-step reaction mechanism involving 2 neutral intermediates, beta-farnesene and allofarnesene (PubMed:30226766). The cytochrome P450 monooxygenase aba1 might then be involved in the conversion of alpha-ionylideneethane to alpha-ionylideneacetic acid (Probable). Alpha-ionylideneacetic acid is further converted to abscisic acid in 2 steps involving the cytochrome P450 monooxygenase aba2 and the short-chain dehydrogenase/reductase aba4, via the intermediates 1'-deoxy-ABA or 1',4'-trans-diol-ABA, depending on the order of action of these 2 enzymes (Probable). Aba2 is responsible for the hydroxylation of carbon atom C-1' and aba4 might be involved in the oxidation of the C-4' carbon atom (PubMed:16820452).</text>
</comment>
<comment type="cofactor">
    <cofactor evidence="1">
        <name>heme</name>
        <dbReference type="ChEBI" id="CHEBI:30413"/>
    </cofactor>
</comment>
<comment type="pathway">
    <text evidence="5">Hormone biosynthesis.</text>
</comment>
<comment type="subcellular location">
    <subcellularLocation>
        <location evidence="2">Membrane</location>
        <topology evidence="2">Single-pass membrane protein</topology>
    </subcellularLocation>
</comment>
<comment type="induction">
    <text evidence="5">Expression is persistently induced 60 minutes after the addition of the ABA precursor mevalonic acid (MVA) to the medium.</text>
</comment>
<comment type="disruption phenotype">
    <text evidence="5">Impairs the production of abscisic acid (ABA) and leads to the accumulation of 1'-deoxy-ABA.</text>
</comment>
<comment type="similarity">
    <text evidence="8">Belongs to the cytochrome P450 family.</text>
</comment>
<accession>A0A384JQH2</accession>
<keyword id="KW-0325">Glycoprotein</keyword>
<keyword id="KW-0349">Heme</keyword>
<keyword id="KW-0408">Iron</keyword>
<keyword id="KW-0472">Membrane</keyword>
<keyword id="KW-0479">Metal-binding</keyword>
<keyword id="KW-0503">Monooxygenase</keyword>
<keyword id="KW-0560">Oxidoreductase</keyword>
<keyword id="KW-1185">Reference proteome</keyword>
<keyword id="KW-0812">Transmembrane</keyword>
<keyword id="KW-1133">Transmembrane helix</keyword>
<keyword id="KW-0843">Virulence</keyword>
<evidence type="ECO:0000250" key="1">
    <source>
        <dbReference type="UniProtKB" id="P04798"/>
    </source>
</evidence>
<evidence type="ECO:0000255" key="2"/>
<evidence type="ECO:0000255" key="3">
    <source>
        <dbReference type="PROSITE-ProRule" id="PRU00498"/>
    </source>
</evidence>
<evidence type="ECO:0000269" key="4">
    <source>
    </source>
</evidence>
<evidence type="ECO:0000269" key="5">
    <source>
    </source>
</evidence>
<evidence type="ECO:0000269" key="6">
    <source>
    </source>
</evidence>
<evidence type="ECO:0000303" key="7">
    <source>
    </source>
</evidence>
<evidence type="ECO:0000305" key="8"/>
<evidence type="ECO:0000305" key="9">
    <source>
    </source>
</evidence>
<protein>
    <recommendedName>
        <fullName evidence="7">Cytochrome P450 monooxygenase aba2</fullName>
        <ecNumber evidence="9">1.-.-.-</ecNumber>
    </recommendedName>
    <alternativeName>
        <fullName evidence="7">Abscisic acid biosynthesis cluster protein 2</fullName>
    </alternativeName>
</protein>
<organism>
    <name type="scientific">Botryotinia fuckeliana (strain B05.10)</name>
    <name type="common">Noble rot fungus</name>
    <name type="synonym">Botrytis cinerea</name>
    <dbReference type="NCBI Taxonomy" id="332648"/>
    <lineage>
        <taxon>Eukaryota</taxon>
        <taxon>Fungi</taxon>
        <taxon>Dikarya</taxon>
        <taxon>Ascomycota</taxon>
        <taxon>Pezizomycotina</taxon>
        <taxon>Leotiomycetes</taxon>
        <taxon>Helotiales</taxon>
        <taxon>Sclerotiniaceae</taxon>
        <taxon>Botrytis</taxon>
    </lineage>
</organism>
<name>ABA2_BOTFB</name>
<sequence>MLLSIKDLSEKYIMLLDVKDLSTLKTTVAVLVTVALIAQVLWKIFFHPLSAFPGPWFNRISEIPGSWVIATGKQHSYYRKLHEKYGPVVRVAPNELSFIGDRAWDDIYGVQKKGPNFEKSPIFIGAVSPLDGQTGISLAPNEAHTRQRRALAHVFSNTALLQQEEIMRSHVDKLVGQLKKTIAENRPINFSNWYTYTTFDMMGDLCFAEPFGCLDQGGATEWSTSVINVFKSAAWDQSIRRVAGVNTWLQKLMVKLLIPSKAANWRKVHFQNSREKTLRRLADGNREHKDFIYHILKNKEAKNSLSETEIILNMVLLISAGTETTASLLTGWTYFICTHPEVYKRLTDEIRGRFNSEQDITWETVKDLPYLHATLSEALRLYSPAPANQQRIVPPGGSVIDGHFVPGKTTVAVAPWAAINSSLNFKDPQKFIPERWLGDERFVNDKLNASQPFSLGPRGCIGKNLSFFEMRLITSRLLWNFDVSLVTTGEHGETNKLWDMDGAGKYMKVYQTWNKPDMWVMLKEVPR</sequence>